<dbReference type="EC" id="6.1.1.1" evidence="1"/>
<dbReference type="EMBL" id="CP000088">
    <property type="protein sequence ID" value="AAZ56076.1"/>
    <property type="status" value="ALT_INIT"/>
    <property type="molecule type" value="Genomic_DNA"/>
</dbReference>
<dbReference type="RefSeq" id="WP_016188948.1">
    <property type="nucleotide sequence ID" value="NC_007333.1"/>
</dbReference>
<dbReference type="SMR" id="Q47N93"/>
<dbReference type="STRING" id="269800.Tfu_2043"/>
<dbReference type="KEGG" id="tfu:Tfu_2043"/>
<dbReference type="eggNOG" id="COG0162">
    <property type="taxonomic scope" value="Bacteria"/>
</dbReference>
<dbReference type="HOGENOM" id="CLU_024003_0_2_11"/>
<dbReference type="OrthoDB" id="9804243at2"/>
<dbReference type="GO" id="GO:0005829">
    <property type="term" value="C:cytosol"/>
    <property type="evidence" value="ECO:0007669"/>
    <property type="project" value="TreeGrafter"/>
</dbReference>
<dbReference type="GO" id="GO:0005524">
    <property type="term" value="F:ATP binding"/>
    <property type="evidence" value="ECO:0007669"/>
    <property type="project" value="UniProtKB-UniRule"/>
</dbReference>
<dbReference type="GO" id="GO:0003723">
    <property type="term" value="F:RNA binding"/>
    <property type="evidence" value="ECO:0007669"/>
    <property type="project" value="UniProtKB-KW"/>
</dbReference>
<dbReference type="GO" id="GO:0004831">
    <property type="term" value="F:tyrosine-tRNA ligase activity"/>
    <property type="evidence" value="ECO:0007669"/>
    <property type="project" value="UniProtKB-UniRule"/>
</dbReference>
<dbReference type="GO" id="GO:0006437">
    <property type="term" value="P:tyrosyl-tRNA aminoacylation"/>
    <property type="evidence" value="ECO:0007669"/>
    <property type="project" value="UniProtKB-UniRule"/>
</dbReference>
<dbReference type="CDD" id="cd00805">
    <property type="entry name" value="TyrRS_core"/>
    <property type="match status" value="1"/>
</dbReference>
<dbReference type="FunFam" id="1.10.240.10:FF:000001">
    <property type="entry name" value="Tyrosine--tRNA ligase"/>
    <property type="match status" value="1"/>
</dbReference>
<dbReference type="FunFam" id="3.10.290.10:FF:000014">
    <property type="entry name" value="Tyrosine--tRNA ligase"/>
    <property type="match status" value="1"/>
</dbReference>
<dbReference type="FunFam" id="3.40.50.620:FF:000008">
    <property type="entry name" value="Tyrosine--tRNA ligase"/>
    <property type="match status" value="1"/>
</dbReference>
<dbReference type="Gene3D" id="3.40.50.620">
    <property type="entry name" value="HUPs"/>
    <property type="match status" value="1"/>
</dbReference>
<dbReference type="Gene3D" id="3.10.290.10">
    <property type="entry name" value="RNA-binding S4 domain"/>
    <property type="match status" value="1"/>
</dbReference>
<dbReference type="Gene3D" id="1.10.240.10">
    <property type="entry name" value="Tyrosyl-Transfer RNA Synthetase"/>
    <property type="match status" value="1"/>
</dbReference>
<dbReference type="HAMAP" id="MF_02006">
    <property type="entry name" value="Tyr_tRNA_synth_type1"/>
    <property type="match status" value="1"/>
</dbReference>
<dbReference type="InterPro" id="IPR001412">
    <property type="entry name" value="aa-tRNA-synth_I_CS"/>
</dbReference>
<dbReference type="InterPro" id="IPR002305">
    <property type="entry name" value="aa-tRNA-synth_Ic"/>
</dbReference>
<dbReference type="InterPro" id="IPR014729">
    <property type="entry name" value="Rossmann-like_a/b/a_fold"/>
</dbReference>
<dbReference type="InterPro" id="IPR002942">
    <property type="entry name" value="S4_RNA-bd"/>
</dbReference>
<dbReference type="InterPro" id="IPR036986">
    <property type="entry name" value="S4_RNA-bd_sf"/>
</dbReference>
<dbReference type="InterPro" id="IPR054608">
    <property type="entry name" value="SYY-like_C"/>
</dbReference>
<dbReference type="InterPro" id="IPR002307">
    <property type="entry name" value="Tyr-tRNA-ligase"/>
</dbReference>
<dbReference type="InterPro" id="IPR024088">
    <property type="entry name" value="Tyr-tRNA-ligase_bac-type"/>
</dbReference>
<dbReference type="InterPro" id="IPR024107">
    <property type="entry name" value="Tyr-tRNA-ligase_bac_1"/>
</dbReference>
<dbReference type="NCBIfam" id="TIGR00234">
    <property type="entry name" value="tyrS"/>
    <property type="match status" value="1"/>
</dbReference>
<dbReference type="PANTHER" id="PTHR11766:SF0">
    <property type="entry name" value="TYROSINE--TRNA LIGASE, MITOCHONDRIAL"/>
    <property type="match status" value="1"/>
</dbReference>
<dbReference type="PANTHER" id="PTHR11766">
    <property type="entry name" value="TYROSYL-TRNA SYNTHETASE"/>
    <property type="match status" value="1"/>
</dbReference>
<dbReference type="Pfam" id="PF22421">
    <property type="entry name" value="SYY_C-terminal"/>
    <property type="match status" value="1"/>
</dbReference>
<dbReference type="Pfam" id="PF00579">
    <property type="entry name" value="tRNA-synt_1b"/>
    <property type="match status" value="1"/>
</dbReference>
<dbReference type="PRINTS" id="PR01040">
    <property type="entry name" value="TRNASYNTHTYR"/>
</dbReference>
<dbReference type="SMART" id="SM00363">
    <property type="entry name" value="S4"/>
    <property type="match status" value="1"/>
</dbReference>
<dbReference type="SUPFAM" id="SSF55174">
    <property type="entry name" value="Alpha-L RNA-binding motif"/>
    <property type="match status" value="1"/>
</dbReference>
<dbReference type="SUPFAM" id="SSF52374">
    <property type="entry name" value="Nucleotidylyl transferase"/>
    <property type="match status" value="1"/>
</dbReference>
<dbReference type="PROSITE" id="PS00178">
    <property type="entry name" value="AA_TRNA_LIGASE_I"/>
    <property type="match status" value="1"/>
</dbReference>
<dbReference type="PROSITE" id="PS50889">
    <property type="entry name" value="S4"/>
    <property type="match status" value="1"/>
</dbReference>
<keyword id="KW-0030">Aminoacyl-tRNA synthetase</keyword>
<keyword id="KW-0067">ATP-binding</keyword>
<keyword id="KW-0963">Cytoplasm</keyword>
<keyword id="KW-0436">Ligase</keyword>
<keyword id="KW-0547">Nucleotide-binding</keyword>
<keyword id="KW-0648">Protein biosynthesis</keyword>
<keyword id="KW-0694">RNA-binding</keyword>
<proteinExistence type="inferred from homology"/>
<protein>
    <recommendedName>
        <fullName evidence="1">Tyrosine--tRNA ligase</fullName>
        <ecNumber evidence="1">6.1.1.1</ecNumber>
    </recommendedName>
    <alternativeName>
        <fullName evidence="1">Tyrosyl-tRNA synthetase</fullName>
        <shortName evidence="1">TyrRS</shortName>
    </alternativeName>
</protein>
<name>SYY_THEFY</name>
<reference key="1">
    <citation type="journal article" date="2007" name="J. Bacteriol.">
        <title>Genome sequence and analysis of the soil cellulolytic actinomycete Thermobifida fusca YX.</title>
        <authorList>
            <person name="Lykidis A."/>
            <person name="Mavromatis K."/>
            <person name="Ivanova N."/>
            <person name="Anderson I."/>
            <person name="Land M."/>
            <person name="DiBartolo G."/>
            <person name="Martinez M."/>
            <person name="Lapidus A."/>
            <person name="Lucas S."/>
            <person name="Copeland A."/>
            <person name="Richardson P."/>
            <person name="Wilson D.B."/>
            <person name="Kyrpides N."/>
        </authorList>
    </citation>
    <scope>NUCLEOTIDE SEQUENCE [LARGE SCALE GENOMIC DNA]</scope>
    <source>
        <strain>YX</strain>
    </source>
</reference>
<comment type="function">
    <text evidence="1">Catalyzes the attachment of tyrosine to tRNA(Tyr) in a two-step reaction: tyrosine is first activated by ATP to form Tyr-AMP and then transferred to the acceptor end of tRNA(Tyr).</text>
</comment>
<comment type="catalytic activity">
    <reaction evidence="1">
        <text>tRNA(Tyr) + L-tyrosine + ATP = L-tyrosyl-tRNA(Tyr) + AMP + diphosphate + H(+)</text>
        <dbReference type="Rhea" id="RHEA:10220"/>
        <dbReference type="Rhea" id="RHEA-COMP:9706"/>
        <dbReference type="Rhea" id="RHEA-COMP:9707"/>
        <dbReference type="ChEBI" id="CHEBI:15378"/>
        <dbReference type="ChEBI" id="CHEBI:30616"/>
        <dbReference type="ChEBI" id="CHEBI:33019"/>
        <dbReference type="ChEBI" id="CHEBI:58315"/>
        <dbReference type="ChEBI" id="CHEBI:78442"/>
        <dbReference type="ChEBI" id="CHEBI:78536"/>
        <dbReference type="ChEBI" id="CHEBI:456215"/>
        <dbReference type="EC" id="6.1.1.1"/>
    </reaction>
</comment>
<comment type="subunit">
    <text evidence="1">Homodimer.</text>
</comment>
<comment type="subcellular location">
    <subcellularLocation>
        <location evidence="1">Cytoplasm</location>
    </subcellularLocation>
</comment>
<comment type="similarity">
    <text evidence="1">Belongs to the class-I aminoacyl-tRNA synthetase family. TyrS type 1 subfamily.</text>
</comment>
<comment type="sequence caution" evidence="2">
    <conflict type="erroneous initiation">
        <sequence resource="EMBL-CDS" id="AAZ56076"/>
    </conflict>
</comment>
<gene>
    <name evidence="1" type="primary">tyrS</name>
    <name type="ordered locus">Tfu_2043</name>
</gene>
<evidence type="ECO:0000255" key="1">
    <source>
        <dbReference type="HAMAP-Rule" id="MF_02006"/>
    </source>
</evidence>
<evidence type="ECO:0000305" key="2"/>
<sequence length="432" mass="47785">MTDIIDDLQWRGLIAQTTDLDDLRKALADGPVTLYCGFDPTAGSLHVGHLTQALTLARFQRAGHRPIALVGGATGMIGDPKPNAERTLNSPETIRQWVGNLKRQLSSFLEFTPEGAEPKPTDALLLDNAEWLGKLTAIGLLRDIGKHFSINQMLARETVKTRLEGAGMSYTEFSYVLLQSYDYVELYRRHGCTLQIGGSDQWGNITAGLDLIRRMEGNEPHGPAHALTTTLLTKADGTKFGKTESGAVWLDPELTSPYAFYQFWFNSDDRDIPRYLRIFSFRSREEIEELEQKTIERPAERAAQRALAEELTTLVHGEQECRNVIEASKALFGHGTLADLNPDTLGAALKEVPHVELSGTVRELPPLVDLFASTGLVPSKSAARRTIQEGGAYLNNAKVTDIEARVSEADLLHGRYLVLRRGKRNVGGVILR</sequence>
<accession>Q47N93</accession>
<organism>
    <name type="scientific">Thermobifida fusca (strain YX)</name>
    <dbReference type="NCBI Taxonomy" id="269800"/>
    <lineage>
        <taxon>Bacteria</taxon>
        <taxon>Bacillati</taxon>
        <taxon>Actinomycetota</taxon>
        <taxon>Actinomycetes</taxon>
        <taxon>Streptosporangiales</taxon>
        <taxon>Nocardiopsidaceae</taxon>
        <taxon>Thermobifida</taxon>
    </lineage>
</organism>
<feature type="chain" id="PRO_0000234803" description="Tyrosine--tRNA ligase">
    <location>
        <begin position="1"/>
        <end position="432"/>
    </location>
</feature>
<feature type="domain" description="S4 RNA-binding" evidence="1">
    <location>
        <begin position="365"/>
        <end position="422"/>
    </location>
</feature>
<feature type="short sequence motif" description="'HIGH' region">
    <location>
        <begin position="40"/>
        <end position="49"/>
    </location>
</feature>
<feature type="short sequence motif" description="'KMSKS' region">
    <location>
        <begin position="239"/>
        <end position="243"/>
    </location>
</feature>
<feature type="binding site" evidence="1">
    <location>
        <position position="35"/>
    </location>
    <ligand>
        <name>L-tyrosine</name>
        <dbReference type="ChEBI" id="CHEBI:58315"/>
    </ligand>
</feature>
<feature type="binding site" evidence="1">
    <location>
        <position position="175"/>
    </location>
    <ligand>
        <name>L-tyrosine</name>
        <dbReference type="ChEBI" id="CHEBI:58315"/>
    </ligand>
</feature>
<feature type="binding site" evidence="1">
    <location>
        <position position="179"/>
    </location>
    <ligand>
        <name>L-tyrosine</name>
        <dbReference type="ChEBI" id="CHEBI:58315"/>
    </ligand>
</feature>
<feature type="binding site" evidence="1">
    <location>
        <position position="242"/>
    </location>
    <ligand>
        <name>ATP</name>
        <dbReference type="ChEBI" id="CHEBI:30616"/>
    </ligand>
</feature>